<accession>Q9LYF6</accession>
<keyword id="KW-1003">Cell membrane</keyword>
<keyword id="KW-0903">Direct protein sequencing</keyword>
<keyword id="KW-0325">Glycoprotein</keyword>
<keyword id="KW-0336">GPI-anchor</keyword>
<keyword id="KW-0379">Hydroxylation</keyword>
<keyword id="KW-0449">Lipoprotein</keyword>
<keyword id="KW-0472">Membrane</keyword>
<keyword id="KW-0654">Proteoglycan</keyword>
<keyword id="KW-0873">Pyrrolidone carboxylic acid</keyword>
<keyword id="KW-1185">Reference proteome</keyword>
<keyword id="KW-0732">Signal</keyword>
<organism>
    <name type="scientific">Arabidopsis thaliana</name>
    <name type="common">Mouse-ear cress</name>
    <dbReference type="NCBI Taxonomy" id="3702"/>
    <lineage>
        <taxon>Eukaryota</taxon>
        <taxon>Viridiplantae</taxon>
        <taxon>Streptophyta</taxon>
        <taxon>Embryophyta</taxon>
        <taxon>Tracheophyta</taxon>
        <taxon>Spermatophyta</taxon>
        <taxon>Magnoliopsida</taxon>
        <taxon>eudicotyledons</taxon>
        <taxon>Gunneridae</taxon>
        <taxon>Pentapetalae</taxon>
        <taxon>rosids</taxon>
        <taxon>malvids</taxon>
        <taxon>Brassicales</taxon>
        <taxon>Brassicaceae</taxon>
        <taxon>Camelineae</taxon>
        <taxon>Arabidopsis</taxon>
    </lineage>
</organism>
<reference key="1">
    <citation type="journal article" date="2000" name="Plant Cell">
        <title>The classical arabinogalactan protein gene family of Arabidopsis.</title>
        <authorList>
            <person name="Schultz C.J."/>
            <person name="Johnson K.L."/>
            <person name="Currie G."/>
            <person name="Bacic A."/>
        </authorList>
    </citation>
    <scope>NUCLEOTIDE SEQUENCE [MRNA]</scope>
    <scope>PROTEIN SEQUENCE OF 23-35</scope>
    <scope>HYDROXYLATION AT PRO-27; PRO-29 AND PRO-31</scope>
    <scope>PYROGLUTAMATE FORMATION AT GLN-23</scope>
    <source>
        <strain>cv. Columbia</strain>
    </source>
</reference>
<reference key="2">
    <citation type="journal article" date="2000" name="Nature">
        <title>Sequence and analysis of chromosome 5 of the plant Arabidopsis thaliana.</title>
        <authorList>
            <person name="Tabata S."/>
            <person name="Kaneko T."/>
            <person name="Nakamura Y."/>
            <person name="Kotani H."/>
            <person name="Kato T."/>
            <person name="Asamizu E."/>
            <person name="Miyajima N."/>
            <person name="Sasamoto S."/>
            <person name="Kimura T."/>
            <person name="Hosouchi T."/>
            <person name="Kawashima K."/>
            <person name="Kohara M."/>
            <person name="Matsumoto M."/>
            <person name="Matsuno A."/>
            <person name="Muraki A."/>
            <person name="Nakayama S."/>
            <person name="Nakazaki N."/>
            <person name="Naruo K."/>
            <person name="Okumura S."/>
            <person name="Shinpo S."/>
            <person name="Takeuchi C."/>
            <person name="Wada T."/>
            <person name="Watanabe A."/>
            <person name="Yamada M."/>
            <person name="Yasuda M."/>
            <person name="Sato S."/>
            <person name="de la Bastide M."/>
            <person name="Huang E."/>
            <person name="Spiegel L."/>
            <person name="Gnoj L."/>
            <person name="O'Shaughnessy A."/>
            <person name="Preston R."/>
            <person name="Habermann K."/>
            <person name="Murray J."/>
            <person name="Johnson D."/>
            <person name="Rohlfing T."/>
            <person name="Nelson J."/>
            <person name="Stoneking T."/>
            <person name="Pepin K."/>
            <person name="Spieth J."/>
            <person name="Sekhon M."/>
            <person name="Armstrong J."/>
            <person name="Becker M."/>
            <person name="Belter E."/>
            <person name="Cordum H."/>
            <person name="Cordes M."/>
            <person name="Courtney L."/>
            <person name="Courtney W."/>
            <person name="Dante M."/>
            <person name="Du H."/>
            <person name="Edwards J."/>
            <person name="Fryman J."/>
            <person name="Haakensen B."/>
            <person name="Lamar E."/>
            <person name="Latreille P."/>
            <person name="Leonard S."/>
            <person name="Meyer R."/>
            <person name="Mulvaney E."/>
            <person name="Ozersky P."/>
            <person name="Riley A."/>
            <person name="Strowmatt C."/>
            <person name="Wagner-McPherson C."/>
            <person name="Wollam A."/>
            <person name="Yoakum M."/>
            <person name="Bell M."/>
            <person name="Dedhia N."/>
            <person name="Parnell L."/>
            <person name="Shah R."/>
            <person name="Rodriguez M."/>
            <person name="Hoon See L."/>
            <person name="Vil D."/>
            <person name="Baker J."/>
            <person name="Kirchoff K."/>
            <person name="Toth K."/>
            <person name="King L."/>
            <person name="Bahret A."/>
            <person name="Miller B."/>
            <person name="Marra M.A."/>
            <person name="Martienssen R."/>
            <person name="McCombie W.R."/>
            <person name="Wilson R.K."/>
            <person name="Murphy G."/>
            <person name="Bancroft I."/>
            <person name="Volckaert G."/>
            <person name="Wambutt R."/>
            <person name="Duesterhoeft A."/>
            <person name="Stiekema W."/>
            <person name="Pohl T."/>
            <person name="Entian K.-D."/>
            <person name="Terryn N."/>
            <person name="Hartley N."/>
            <person name="Bent E."/>
            <person name="Johnson S."/>
            <person name="Langham S.-A."/>
            <person name="McCullagh B."/>
            <person name="Robben J."/>
            <person name="Grymonprez B."/>
            <person name="Zimmermann W."/>
            <person name="Ramsperger U."/>
            <person name="Wedler H."/>
            <person name="Balke K."/>
            <person name="Wedler E."/>
            <person name="Peters S."/>
            <person name="van Staveren M."/>
            <person name="Dirkse W."/>
            <person name="Mooijman P."/>
            <person name="Klein Lankhorst R."/>
            <person name="Weitzenegger T."/>
            <person name="Bothe G."/>
            <person name="Rose M."/>
            <person name="Hauf J."/>
            <person name="Berneiser S."/>
            <person name="Hempel S."/>
            <person name="Feldpausch M."/>
            <person name="Lamberth S."/>
            <person name="Villarroel R."/>
            <person name="Gielen J."/>
            <person name="Ardiles W."/>
            <person name="Bents O."/>
            <person name="Lemcke K."/>
            <person name="Kolesov G."/>
            <person name="Mayer K.F.X."/>
            <person name="Rudd S."/>
            <person name="Schoof H."/>
            <person name="Schueller C."/>
            <person name="Zaccaria P."/>
            <person name="Mewes H.-W."/>
            <person name="Bevan M."/>
            <person name="Fransz P.F."/>
        </authorList>
    </citation>
    <scope>NUCLEOTIDE SEQUENCE [LARGE SCALE GENOMIC DNA]</scope>
    <source>
        <strain>cv. Columbia</strain>
    </source>
</reference>
<reference key="3">
    <citation type="journal article" date="2017" name="Plant J.">
        <title>Araport11: a complete reannotation of the Arabidopsis thaliana reference genome.</title>
        <authorList>
            <person name="Cheng C.Y."/>
            <person name="Krishnakumar V."/>
            <person name="Chan A.P."/>
            <person name="Thibaud-Nissen F."/>
            <person name="Schobel S."/>
            <person name="Town C.D."/>
        </authorList>
    </citation>
    <scope>GENOME REANNOTATION</scope>
    <source>
        <strain>cv. Columbia</strain>
    </source>
</reference>
<reference key="4">
    <citation type="journal article" date="2003" name="Science">
        <title>Empirical analysis of transcriptional activity in the Arabidopsis genome.</title>
        <authorList>
            <person name="Yamada K."/>
            <person name="Lim J."/>
            <person name="Dale J.M."/>
            <person name="Chen H."/>
            <person name="Shinn P."/>
            <person name="Palm C.J."/>
            <person name="Southwick A.M."/>
            <person name="Wu H.C."/>
            <person name="Kim C.J."/>
            <person name="Nguyen M."/>
            <person name="Pham P.K."/>
            <person name="Cheuk R.F."/>
            <person name="Karlin-Newmann G."/>
            <person name="Liu S.X."/>
            <person name="Lam B."/>
            <person name="Sakano H."/>
            <person name="Wu T."/>
            <person name="Yu G."/>
            <person name="Miranda M."/>
            <person name="Quach H.L."/>
            <person name="Tripp M."/>
            <person name="Chang C.H."/>
            <person name="Lee J.M."/>
            <person name="Toriumi M.J."/>
            <person name="Chan M.M."/>
            <person name="Tang C.C."/>
            <person name="Onodera C.S."/>
            <person name="Deng J.M."/>
            <person name="Akiyama K."/>
            <person name="Ansari Y."/>
            <person name="Arakawa T."/>
            <person name="Banh J."/>
            <person name="Banno F."/>
            <person name="Bowser L."/>
            <person name="Brooks S.Y."/>
            <person name="Carninci P."/>
            <person name="Chao Q."/>
            <person name="Choy N."/>
            <person name="Enju A."/>
            <person name="Goldsmith A.D."/>
            <person name="Gurjal M."/>
            <person name="Hansen N.F."/>
            <person name="Hayashizaki Y."/>
            <person name="Johnson-Hopson C."/>
            <person name="Hsuan V.W."/>
            <person name="Iida K."/>
            <person name="Karnes M."/>
            <person name="Khan S."/>
            <person name="Koesema E."/>
            <person name="Ishida J."/>
            <person name="Jiang P.X."/>
            <person name="Jones T."/>
            <person name="Kawai J."/>
            <person name="Kamiya A."/>
            <person name="Meyers C."/>
            <person name="Nakajima M."/>
            <person name="Narusaka M."/>
            <person name="Seki M."/>
            <person name="Sakurai T."/>
            <person name="Satou M."/>
            <person name="Tamse R."/>
            <person name="Vaysberg M."/>
            <person name="Wallender E.K."/>
            <person name="Wong C."/>
            <person name="Yamamura Y."/>
            <person name="Yuan S."/>
            <person name="Shinozaki K."/>
            <person name="Davis R.W."/>
            <person name="Theologis A."/>
            <person name="Ecker J.R."/>
        </authorList>
    </citation>
    <scope>NUCLEOTIDE SEQUENCE [LARGE SCALE MRNA]</scope>
    <source>
        <strain>cv. Columbia</strain>
    </source>
</reference>
<reference key="5">
    <citation type="journal article" date="2004" name="J. Biol. Chem.">
        <title>Post-translational modifications of arabinogalactan-peptides of Arabidopsis thaliana. Endoplasmic reticulum and glycosylphosphatidylinositol-anchor signal cleavage sites and hydroxylation of proline.</title>
        <authorList>
            <person name="Schultz C.J."/>
            <person name="Ferguson K.L."/>
            <person name="Lahnstein J."/>
            <person name="Bacic A."/>
        </authorList>
    </citation>
    <scope>PROTEIN SEQUENCE OF 23-35</scope>
    <scope>HYDROXYLATION AT PRO-27; PRO-29 AND PRO-31</scope>
    <scope>PYROGLUTAMATE FORMATION AT GLN-23</scope>
    <scope>GLYCOSYLATION AT PRO-27; PRO-29 AND PRO-31</scope>
    <scope>GPI-ANCHOR AT SER-35</scope>
</reference>
<reference key="6">
    <citation type="journal article" date="2002" name="Plant Physiol.">
        <title>Using genomic resources to guide research directions. The arabinogalactan protein gene family as a test case.</title>
        <authorList>
            <person name="Schultz C.J."/>
            <person name="Rumsewicz M.P."/>
            <person name="Johnson K.L."/>
            <person name="Jones B.J."/>
            <person name="Gaspar Y.M."/>
            <person name="Bacic A."/>
        </authorList>
    </citation>
    <scope>GENE FAMILY</scope>
    <scope>NOMENCLATURE</scope>
</reference>
<reference key="7">
    <citation type="journal article" date="2014" name="J. Exp. Bot.">
        <title>Differential expression patterns of arabinogalactan proteins in Arabidopsis thaliana reproductive tissues.</title>
        <authorList>
            <person name="Pereira A.M."/>
            <person name="Masiero S."/>
            <person name="Nobre M.S."/>
            <person name="Costa M.L."/>
            <person name="Solis M.T."/>
            <person name="Testillano P.S."/>
            <person name="Sprunck S."/>
            <person name="Coimbra S."/>
        </authorList>
    </citation>
    <scope>TISSUE SPECIFICITY</scope>
</reference>
<sequence>MAISKASIVVLMMVIISVVASAQSEAPAPSPTSGSSAISASFVSAGVAAVAALVFGSALRI</sequence>
<name>AGP15_ARATH</name>
<protein>
    <recommendedName>
        <fullName evidence="4">Arabinogalactan protein 15</fullName>
        <shortName evidence="4">AtAGP15</shortName>
    </recommendedName>
    <alternativeName>
        <fullName evidence="4">Arabinogalactan peptide 15</fullName>
        <shortName evidence="4">AG-peptide 15</shortName>
    </alternativeName>
</protein>
<evidence type="ECO:0000269" key="1">
    <source>
    </source>
</evidence>
<evidence type="ECO:0000269" key="2">
    <source>
    </source>
</evidence>
<evidence type="ECO:0000269" key="3">
    <source>
    </source>
</evidence>
<evidence type="ECO:0000303" key="4">
    <source>
    </source>
</evidence>
<evidence type="ECO:0000305" key="5"/>
<evidence type="ECO:0000305" key="6">
    <source>
    </source>
</evidence>
<evidence type="ECO:0000305" key="7">
    <source>
    </source>
</evidence>
<dbReference type="EMBL" id="AF195896">
    <property type="protein sequence ID" value="AAG24283.1"/>
    <property type="molecule type" value="mRNA"/>
</dbReference>
<dbReference type="EMBL" id="AL163814">
    <property type="protein sequence ID" value="CAB87692.1"/>
    <property type="molecule type" value="Genomic_DNA"/>
</dbReference>
<dbReference type="EMBL" id="CP002688">
    <property type="protein sequence ID" value="AED91716.1"/>
    <property type="molecule type" value="Genomic_DNA"/>
</dbReference>
<dbReference type="EMBL" id="AF375418">
    <property type="protein sequence ID" value="AAK53002.1"/>
    <property type="molecule type" value="mRNA"/>
</dbReference>
<dbReference type="EMBL" id="AY129482">
    <property type="protein sequence ID" value="AAM91068.1"/>
    <property type="molecule type" value="mRNA"/>
</dbReference>
<dbReference type="PIR" id="T48533">
    <property type="entry name" value="T48533"/>
</dbReference>
<dbReference type="RefSeq" id="NP_196735.1">
    <property type="nucleotide sequence ID" value="NM_121212.3"/>
</dbReference>
<dbReference type="BioGRID" id="16324">
    <property type="interactions" value="3"/>
</dbReference>
<dbReference type="FunCoup" id="Q9LYF6">
    <property type="interactions" value="5"/>
</dbReference>
<dbReference type="IntAct" id="Q9LYF6">
    <property type="interactions" value="3"/>
</dbReference>
<dbReference type="STRING" id="3702.Q9LYF6"/>
<dbReference type="GlyCosmos" id="Q9LYF6">
    <property type="glycosylation" value="3 sites, No reported glycans"/>
</dbReference>
<dbReference type="GlyGen" id="Q9LYF6">
    <property type="glycosylation" value="1 site"/>
</dbReference>
<dbReference type="PaxDb" id="3702-AT5G11740.1"/>
<dbReference type="EnsemblPlants" id="AT5G11740.1">
    <property type="protein sequence ID" value="AT5G11740.1"/>
    <property type="gene ID" value="AT5G11740"/>
</dbReference>
<dbReference type="GeneID" id="831046"/>
<dbReference type="Gramene" id="AT5G11740.1">
    <property type="protein sequence ID" value="AT5G11740.1"/>
    <property type="gene ID" value="AT5G11740"/>
</dbReference>
<dbReference type="KEGG" id="ath:AT5G11740"/>
<dbReference type="Araport" id="AT5G11740"/>
<dbReference type="TAIR" id="AT5G11740">
    <property type="gene designation" value="AGP15"/>
</dbReference>
<dbReference type="eggNOG" id="ENOG502SBPF">
    <property type="taxonomic scope" value="Eukaryota"/>
</dbReference>
<dbReference type="HOGENOM" id="CLU_194211_1_0_1"/>
<dbReference type="InParanoid" id="Q9LYF6"/>
<dbReference type="PRO" id="PR:Q9LYF6"/>
<dbReference type="Proteomes" id="UP000006548">
    <property type="component" value="Chromosome 5"/>
</dbReference>
<dbReference type="ExpressionAtlas" id="Q9LYF6">
    <property type="expression patterns" value="baseline and differential"/>
</dbReference>
<dbReference type="GO" id="GO:0005886">
    <property type="term" value="C:plasma membrane"/>
    <property type="evidence" value="ECO:0007669"/>
    <property type="project" value="UniProtKB-SubCell"/>
</dbReference>
<dbReference type="GO" id="GO:0098552">
    <property type="term" value="C:side of membrane"/>
    <property type="evidence" value="ECO:0007669"/>
    <property type="project" value="UniProtKB-KW"/>
</dbReference>
<feature type="signal peptide" evidence="1 2">
    <location>
        <begin position="1"/>
        <end position="22"/>
    </location>
</feature>
<feature type="peptide" id="PRO_0000269017" description="Arabinogalactan protein 15" evidence="1 2">
    <location>
        <begin position="23"/>
        <end position="35"/>
    </location>
</feature>
<feature type="propeptide" id="PRO_0000269018" description="Removed in mature form" evidence="6 7">
    <location>
        <begin position="36"/>
        <end position="61"/>
    </location>
</feature>
<feature type="modified residue" description="Pyrrolidone carboxylic acid" evidence="1 2">
    <location>
        <position position="23"/>
    </location>
</feature>
<feature type="modified residue" description="4-hydroxyproline" evidence="1 2">
    <location>
        <position position="27"/>
    </location>
</feature>
<feature type="modified residue" description="4-hydroxyproline" evidence="1 2">
    <location>
        <position position="29"/>
    </location>
</feature>
<feature type="modified residue" description="4-hydroxyproline" evidence="1 2">
    <location>
        <position position="31"/>
    </location>
</feature>
<feature type="lipid moiety-binding region" description="GPI-anchor amidated serine" evidence="2">
    <location>
        <position position="35"/>
    </location>
</feature>
<feature type="glycosylation site" description="O-linked (Ara...) hydroxyproline" evidence="7">
    <location>
        <position position="27"/>
    </location>
</feature>
<feature type="glycosylation site" description="O-linked (Ara...) hydroxyproline" evidence="7">
    <location>
        <position position="29"/>
    </location>
</feature>
<feature type="glycosylation site" description="O-linked (Ara...) hydroxyproline" evidence="7">
    <location>
        <position position="31"/>
    </location>
</feature>
<proteinExistence type="evidence at protein level"/>
<gene>
    <name evidence="4" type="primary">AGP15</name>
    <name type="ordered locus">At5g11740</name>
    <name type="ORF">T22P22_130</name>
</gene>
<comment type="function">
    <text evidence="5">Proteoglycan that seems to be implicated in diverse developmental roles such as differentiation, cell-cell recognition, embryogenesis and programmed cell death.</text>
</comment>
<comment type="subcellular location">
    <subcellularLocation>
        <location evidence="5">Cell membrane</location>
        <topology evidence="2">Lipid-anchor</topology>
        <topology evidence="2">GPI-anchor</topology>
    </subcellularLocation>
</comment>
<comment type="tissue specificity">
    <text evidence="3">Expressed in reproductive tissues. Expressed in chalaza, funiculus, stigma, septum, style, integument and transmitting tract.</text>
</comment>
<comment type="PTM">
    <text evidence="1 2">Contains 4-hydroxyproline; hydroxylated on Pro-27, Pro-29 and Pro-31.</text>
</comment>
<comment type="PTM">
    <text evidence="7">O-glycosylated on hydroxyprolines; noncontiguous hydroxylproline residues are glycosylated with arabinogalactan.</text>
</comment>
<comment type="similarity">
    <text evidence="5">Belongs to the AG-peptide AGP family.</text>
</comment>